<gene>
    <name evidence="1" type="primary">pfkA</name>
    <name type="ordered locus">Teth39_0683</name>
</gene>
<sequence length="321" mass="35215">MKTIGILTSGGDAPGMNAAIRAVVRTGIYYGLKVKGIMRGYAGLVEDEVIDLNLSSVGDILQKGGTILRTARCEEFKKKEVRKKAYETLQKHGIEGLVVIGGDGSFRGAQLLSEEWNVNTIGIPGTIDNDIPCTDYTIGFDTACNTVIDAINKIRDTATSHERANIIEVMGRNAGYIALYAGLAGGAEMIILPEVEWSIDELCDKITYGIKRGKLHHIIVLAEGVMSAPELAKMIKERLPKLDLRYTILGHIQRGGAPTVMDRVLASQMGARAVELLLENKTKRIISIRNNQIVDDDIDEALSMKKEFNRKLYELSKILSI</sequence>
<reference key="1">
    <citation type="submission" date="2008-01" db="EMBL/GenBank/DDBJ databases">
        <title>Complete sequence of Thermoanaerobacter pseudethanolicus 39E.</title>
        <authorList>
            <person name="Copeland A."/>
            <person name="Lucas S."/>
            <person name="Lapidus A."/>
            <person name="Barry K."/>
            <person name="Glavina del Rio T."/>
            <person name="Dalin E."/>
            <person name="Tice H."/>
            <person name="Pitluck S."/>
            <person name="Bruce D."/>
            <person name="Goodwin L."/>
            <person name="Saunders E."/>
            <person name="Brettin T."/>
            <person name="Detter J.C."/>
            <person name="Han C."/>
            <person name="Schmutz J."/>
            <person name="Larimer F."/>
            <person name="Land M."/>
            <person name="Hauser L."/>
            <person name="Kyrpides N."/>
            <person name="Lykidis A."/>
            <person name="Hemme C."/>
            <person name="Fields M.W."/>
            <person name="He Z."/>
            <person name="Zhou J."/>
            <person name="Richardson P."/>
        </authorList>
    </citation>
    <scope>NUCLEOTIDE SEQUENCE [LARGE SCALE GENOMIC DNA]</scope>
    <source>
        <strain>ATCC 33223 / DSM 2355 / 39E</strain>
    </source>
</reference>
<dbReference type="EC" id="2.7.1.11" evidence="1"/>
<dbReference type="EMBL" id="CP000924">
    <property type="protein sequence ID" value="ABY94346.1"/>
    <property type="molecule type" value="Genomic_DNA"/>
</dbReference>
<dbReference type="RefSeq" id="WP_003868325.1">
    <property type="nucleotide sequence ID" value="NC_010321.1"/>
</dbReference>
<dbReference type="SMR" id="B0K7U7"/>
<dbReference type="STRING" id="340099.Teth39_0683"/>
<dbReference type="KEGG" id="tpd:Teth39_0683"/>
<dbReference type="eggNOG" id="COG0205">
    <property type="taxonomic scope" value="Bacteria"/>
</dbReference>
<dbReference type="HOGENOM" id="CLU_020655_0_1_9"/>
<dbReference type="UniPathway" id="UPA00109">
    <property type="reaction ID" value="UER00182"/>
</dbReference>
<dbReference type="Proteomes" id="UP000002156">
    <property type="component" value="Chromosome"/>
</dbReference>
<dbReference type="GO" id="GO:0005945">
    <property type="term" value="C:6-phosphofructokinase complex"/>
    <property type="evidence" value="ECO:0007669"/>
    <property type="project" value="TreeGrafter"/>
</dbReference>
<dbReference type="GO" id="GO:0003872">
    <property type="term" value="F:6-phosphofructokinase activity"/>
    <property type="evidence" value="ECO:0007669"/>
    <property type="project" value="UniProtKB-UniRule"/>
</dbReference>
<dbReference type="GO" id="GO:0016208">
    <property type="term" value="F:AMP binding"/>
    <property type="evidence" value="ECO:0007669"/>
    <property type="project" value="TreeGrafter"/>
</dbReference>
<dbReference type="GO" id="GO:0005524">
    <property type="term" value="F:ATP binding"/>
    <property type="evidence" value="ECO:0007669"/>
    <property type="project" value="UniProtKB-KW"/>
</dbReference>
<dbReference type="GO" id="GO:0070095">
    <property type="term" value="F:fructose-6-phosphate binding"/>
    <property type="evidence" value="ECO:0007669"/>
    <property type="project" value="TreeGrafter"/>
</dbReference>
<dbReference type="GO" id="GO:0042802">
    <property type="term" value="F:identical protein binding"/>
    <property type="evidence" value="ECO:0007669"/>
    <property type="project" value="TreeGrafter"/>
</dbReference>
<dbReference type="GO" id="GO:0046872">
    <property type="term" value="F:metal ion binding"/>
    <property type="evidence" value="ECO:0007669"/>
    <property type="project" value="UniProtKB-KW"/>
</dbReference>
<dbReference type="GO" id="GO:0048029">
    <property type="term" value="F:monosaccharide binding"/>
    <property type="evidence" value="ECO:0007669"/>
    <property type="project" value="TreeGrafter"/>
</dbReference>
<dbReference type="GO" id="GO:0061621">
    <property type="term" value="P:canonical glycolysis"/>
    <property type="evidence" value="ECO:0007669"/>
    <property type="project" value="TreeGrafter"/>
</dbReference>
<dbReference type="GO" id="GO:0030388">
    <property type="term" value="P:fructose 1,6-bisphosphate metabolic process"/>
    <property type="evidence" value="ECO:0007669"/>
    <property type="project" value="TreeGrafter"/>
</dbReference>
<dbReference type="GO" id="GO:0006002">
    <property type="term" value="P:fructose 6-phosphate metabolic process"/>
    <property type="evidence" value="ECO:0007669"/>
    <property type="project" value="InterPro"/>
</dbReference>
<dbReference type="FunFam" id="3.40.50.450:FF:000001">
    <property type="entry name" value="ATP-dependent 6-phosphofructokinase"/>
    <property type="match status" value="1"/>
</dbReference>
<dbReference type="FunFam" id="3.40.50.460:FF:000002">
    <property type="entry name" value="ATP-dependent 6-phosphofructokinase"/>
    <property type="match status" value="1"/>
</dbReference>
<dbReference type="Gene3D" id="3.40.50.450">
    <property type="match status" value="1"/>
</dbReference>
<dbReference type="Gene3D" id="3.40.50.460">
    <property type="entry name" value="Phosphofructokinase domain"/>
    <property type="match status" value="1"/>
</dbReference>
<dbReference type="HAMAP" id="MF_00339">
    <property type="entry name" value="Phosphofructokinase_I_B1"/>
    <property type="match status" value="1"/>
</dbReference>
<dbReference type="InterPro" id="IPR022953">
    <property type="entry name" value="ATP_PFK"/>
</dbReference>
<dbReference type="InterPro" id="IPR012003">
    <property type="entry name" value="ATP_PFK_prok-type"/>
</dbReference>
<dbReference type="InterPro" id="IPR012828">
    <property type="entry name" value="PFKA_ATP_prok"/>
</dbReference>
<dbReference type="InterPro" id="IPR015912">
    <property type="entry name" value="Phosphofructokinase_CS"/>
</dbReference>
<dbReference type="InterPro" id="IPR000023">
    <property type="entry name" value="Phosphofructokinase_dom"/>
</dbReference>
<dbReference type="InterPro" id="IPR035966">
    <property type="entry name" value="PKF_sf"/>
</dbReference>
<dbReference type="NCBIfam" id="TIGR02482">
    <property type="entry name" value="PFKA_ATP"/>
    <property type="match status" value="1"/>
</dbReference>
<dbReference type="NCBIfam" id="NF002872">
    <property type="entry name" value="PRK03202.1"/>
    <property type="match status" value="1"/>
</dbReference>
<dbReference type="PANTHER" id="PTHR13697:SF4">
    <property type="entry name" value="ATP-DEPENDENT 6-PHOSPHOFRUCTOKINASE"/>
    <property type="match status" value="1"/>
</dbReference>
<dbReference type="PANTHER" id="PTHR13697">
    <property type="entry name" value="PHOSPHOFRUCTOKINASE"/>
    <property type="match status" value="1"/>
</dbReference>
<dbReference type="Pfam" id="PF00365">
    <property type="entry name" value="PFK"/>
    <property type="match status" value="1"/>
</dbReference>
<dbReference type="PIRSF" id="PIRSF000532">
    <property type="entry name" value="ATP_PFK_prok"/>
    <property type="match status" value="1"/>
</dbReference>
<dbReference type="PRINTS" id="PR00476">
    <property type="entry name" value="PHFRCTKINASE"/>
</dbReference>
<dbReference type="SUPFAM" id="SSF53784">
    <property type="entry name" value="Phosphofructokinase"/>
    <property type="match status" value="1"/>
</dbReference>
<dbReference type="PROSITE" id="PS00433">
    <property type="entry name" value="PHOSPHOFRUCTOKINASE"/>
    <property type="match status" value="1"/>
</dbReference>
<evidence type="ECO:0000255" key="1">
    <source>
        <dbReference type="HAMAP-Rule" id="MF_00339"/>
    </source>
</evidence>
<keyword id="KW-0021">Allosteric enzyme</keyword>
<keyword id="KW-0067">ATP-binding</keyword>
<keyword id="KW-0963">Cytoplasm</keyword>
<keyword id="KW-0324">Glycolysis</keyword>
<keyword id="KW-0418">Kinase</keyword>
<keyword id="KW-0460">Magnesium</keyword>
<keyword id="KW-0479">Metal-binding</keyword>
<keyword id="KW-0547">Nucleotide-binding</keyword>
<keyword id="KW-1185">Reference proteome</keyword>
<keyword id="KW-0808">Transferase</keyword>
<proteinExistence type="inferred from homology"/>
<name>PFKA_THEP3</name>
<organism>
    <name type="scientific">Thermoanaerobacter pseudethanolicus (strain ATCC 33223 / 39E)</name>
    <name type="common">Clostridium thermohydrosulfuricum</name>
    <dbReference type="NCBI Taxonomy" id="340099"/>
    <lineage>
        <taxon>Bacteria</taxon>
        <taxon>Bacillati</taxon>
        <taxon>Bacillota</taxon>
        <taxon>Clostridia</taxon>
        <taxon>Thermoanaerobacterales</taxon>
        <taxon>Thermoanaerobacteraceae</taxon>
        <taxon>Thermoanaerobacter</taxon>
    </lineage>
</organism>
<accession>B0K7U7</accession>
<comment type="function">
    <text evidence="1">Catalyzes the phosphorylation of D-fructose 6-phosphate to fructose 1,6-bisphosphate by ATP, the first committing step of glycolysis.</text>
</comment>
<comment type="catalytic activity">
    <reaction evidence="1">
        <text>beta-D-fructose 6-phosphate + ATP = beta-D-fructose 1,6-bisphosphate + ADP + H(+)</text>
        <dbReference type="Rhea" id="RHEA:16109"/>
        <dbReference type="ChEBI" id="CHEBI:15378"/>
        <dbReference type="ChEBI" id="CHEBI:30616"/>
        <dbReference type="ChEBI" id="CHEBI:32966"/>
        <dbReference type="ChEBI" id="CHEBI:57634"/>
        <dbReference type="ChEBI" id="CHEBI:456216"/>
        <dbReference type="EC" id="2.7.1.11"/>
    </reaction>
</comment>
<comment type="cofactor">
    <cofactor evidence="1">
        <name>Mg(2+)</name>
        <dbReference type="ChEBI" id="CHEBI:18420"/>
    </cofactor>
</comment>
<comment type="activity regulation">
    <text evidence="1">Allosterically activated by ADP and other diphosphonucleosides, and allosterically inhibited by phosphoenolpyruvate.</text>
</comment>
<comment type="pathway">
    <text evidence="1">Carbohydrate degradation; glycolysis; D-glyceraldehyde 3-phosphate and glycerone phosphate from D-glucose: step 3/4.</text>
</comment>
<comment type="subunit">
    <text evidence="1">Homotetramer.</text>
</comment>
<comment type="subcellular location">
    <subcellularLocation>
        <location evidence="1">Cytoplasm</location>
    </subcellularLocation>
</comment>
<comment type="similarity">
    <text evidence="1">Belongs to the phosphofructokinase type A (PFKA) family. ATP-dependent PFK group I subfamily. Prokaryotic clade 'B1' sub-subfamily.</text>
</comment>
<protein>
    <recommendedName>
        <fullName evidence="1">ATP-dependent 6-phosphofructokinase</fullName>
        <shortName evidence="1">ATP-PFK</shortName>
        <shortName evidence="1">Phosphofructokinase</shortName>
        <ecNumber evidence="1">2.7.1.11</ecNumber>
    </recommendedName>
    <alternativeName>
        <fullName evidence="1">Phosphohexokinase</fullName>
    </alternativeName>
</protein>
<feature type="chain" id="PRO_1000120064" description="ATP-dependent 6-phosphofructokinase">
    <location>
        <begin position="1"/>
        <end position="321"/>
    </location>
</feature>
<feature type="active site" description="Proton acceptor" evidence="1">
    <location>
        <position position="128"/>
    </location>
</feature>
<feature type="binding site" evidence="1">
    <location>
        <position position="11"/>
    </location>
    <ligand>
        <name>ATP</name>
        <dbReference type="ChEBI" id="CHEBI:30616"/>
    </ligand>
</feature>
<feature type="binding site" evidence="1">
    <location>
        <begin position="21"/>
        <end position="25"/>
    </location>
    <ligand>
        <name>ADP</name>
        <dbReference type="ChEBI" id="CHEBI:456216"/>
        <note>allosteric activator; ligand shared between dimeric partners</note>
    </ligand>
</feature>
<feature type="binding site" evidence="1">
    <location>
        <begin position="72"/>
        <end position="73"/>
    </location>
    <ligand>
        <name>ATP</name>
        <dbReference type="ChEBI" id="CHEBI:30616"/>
    </ligand>
</feature>
<feature type="binding site" evidence="1">
    <location>
        <begin position="102"/>
        <end position="105"/>
    </location>
    <ligand>
        <name>ATP</name>
        <dbReference type="ChEBI" id="CHEBI:30616"/>
    </ligand>
</feature>
<feature type="binding site" evidence="1">
    <location>
        <position position="103"/>
    </location>
    <ligand>
        <name>Mg(2+)</name>
        <dbReference type="ChEBI" id="CHEBI:18420"/>
        <note>catalytic</note>
    </ligand>
</feature>
<feature type="binding site" description="in other chain" evidence="1">
    <location>
        <begin position="126"/>
        <end position="128"/>
    </location>
    <ligand>
        <name>substrate</name>
        <note>ligand shared between dimeric partners</note>
    </ligand>
</feature>
<feature type="binding site" description="in other chain" evidence="1">
    <location>
        <position position="155"/>
    </location>
    <ligand>
        <name>ADP</name>
        <dbReference type="ChEBI" id="CHEBI:456216"/>
        <note>allosteric activator; ligand shared between dimeric partners</note>
    </ligand>
</feature>
<feature type="binding site" evidence="1">
    <location>
        <position position="163"/>
    </location>
    <ligand>
        <name>substrate</name>
        <note>ligand shared between dimeric partners</note>
    </ligand>
</feature>
<feature type="binding site" description="in other chain" evidence="1">
    <location>
        <begin position="170"/>
        <end position="172"/>
    </location>
    <ligand>
        <name>substrate</name>
        <note>ligand shared between dimeric partners</note>
    </ligand>
</feature>
<feature type="binding site" description="in other chain" evidence="1">
    <location>
        <begin position="186"/>
        <end position="188"/>
    </location>
    <ligand>
        <name>ADP</name>
        <dbReference type="ChEBI" id="CHEBI:456216"/>
        <note>allosteric activator; ligand shared between dimeric partners</note>
    </ligand>
</feature>
<feature type="binding site" description="in other chain" evidence="1">
    <location>
        <position position="212"/>
    </location>
    <ligand>
        <name>ADP</name>
        <dbReference type="ChEBI" id="CHEBI:456216"/>
        <note>allosteric activator; ligand shared between dimeric partners</note>
    </ligand>
</feature>
<feature type="binding site" description="in other chain" evidence="1">
    <location>
        <begin position="214"/>
        <end position="216"/>
    </location>
    <ligand>
        <name>ADP</name>
        <dbReference type="ChEBI" id="CHEBI:456216"/>
        <note>allosteric activator; ligand shared between dimeric partners</note>
    </ligand>
</feature>
<feature type="binding site" description="in other chain" evidence="1">
    <location>
        <position position="223"/>
    </location>
    <ligand>
        <name>substrate</name>
        <note>ligand shared between dimeric partners</note>
    </ligand>
</feature>
<feature type="binding site" evidence="1">
    <location>
        <position position="245"/>
    </location>
    <ligand>
        <name>substrate</name>
        <note>ligand shared between dimeric partners</note>
    </ligand>
</feature>
<feature type="binding site" description="in other chain" evidence="1">
    <location>
        <begin position="251"/>
        <end position="254"/>
    </location>
    <ligand>
        <name>substrate</name>
        <note>ligand shared between dimeric partners</note>
    </ligand>
</feature>